<name>TES_MUSPF</name>
<protein>
    <recommendedName>
        <fullName>Testin</fullName>
    </recommendedName>
</protein>
<keyword id="KW-0965">Cell junction</keyword>
<keyword id="KW-0963">Cytoplasm</keyword>
<keyword id="KW-0440">LIM domain</keyword>
<keyword id="KW-0479">Metal-binding</keyword>
<keyword id="KW-1185">Reference proteome</keyword>
<keyword id="KW-0677">Repeat</keyword>
<keyword id="KW-0862">Zinc</keyword>
<comment type="function">
    <text evidence="1">Scaffold protein that may play a role in cell adhesion, cell spreading and in the reorganization of the actin cytoskeleton. Plays a role in the regulation of cell proliferation. May act as a tumor suppressor (By similarity).</text>
</comment>
<comment type="subunit">
    <text evidence="1">Interacts via LIM domain 1 with ZYX. Interacts (via LIM domain 3) with ENAH and VASP. Interacts with ALKBH4, talin, actin, alpha-actinin, GRIP1 and PXN (By similarity). Interacts (via LIM domain 2) with ACTL7A (via N-terminus). Heterodimer with ACTL7A; the heterodimer interacts with ENAH to form a heterotrimer (By similarity).</text>
</comment>
<comment type="subcellular location">
    <subcellularLocation>
        <location evidence="1">Cytoplasm</location>
    </subcellularLocation>
    <subcellularLocation>
        <location evidence="1">Cell junction</location>
        <location evidence="1">Focal adhesion</location>
    </subcellularLocation>
    <text evidence="1">Detected along actin stress fibers.</text>
</comment>
<comment type="domain">
    <text evidence="1">The N-terminal and the C-terminal halves of the protein can associate with each other, thereby hindering interactions with ZYX.</text>
</comment>
<comment type="similarity">
    <text evidence="5">Belongs to the prickle / espinas / testin family.</text>
</comment>
<dbReference type="EMBL" id="DP000183">
    <property type="protein sequence ID" value="ABI93649.1"/>
    <property type="molecule type" value="Genomic_DNA"/>
</dbReference>
<dbReference type="RefSeq" id="XP_004741981.1">
    <property type="nucleotide sequence ID" value="XM_004741924.3"/>
</dbReference>
<dbReference type="SMR" id="Q07E27"/>
<dbReference type="FunCoup" id="Q07E27">
    <property type="interactions" value="10"/>
</dbReference>
<dbReference type="STRING" id="9669.ENSMPUP00000007180"/>
<dbReference type="GeneID" id="101677523"/>
<dbReference type="KEGG" id="mpuf:101677523"/>
<dbReference type="CTD" id="26136"/>
<dbReference type="eggNOG" id="KOG1704">
    <property type="taxonomic scope" value="Eukaryota"/>
</dbReference>
<dbReference type="HOGENOM" id="CLU_008937_1_1_1"/>
<dbReference type="InParanoid" id="Q07E27"/>
<dbReference type="OMA" id="PHMGPHS"/>
<dbReference type="OrthoDB" id="10069167at2759"/>
<dbReference type="Proteomes" id="UP000000715">
    <property type="component" value="Unplaced"/>
</dbReference>
<dbReference type="GO" id="GO:0005737">
    <property type="term" value="C:cytoplasm"/>
    <property type="evidence" value="ECO:0000250"/>
    <property type="project" value="UniProtKB"/>
</dbReference>
<dbReference type="GO" id="GO:0005829">
    <property type="term" value="C:cytosol"/>
    <property type="evidence" value="ECO:0007669"/>
    <property type="project" value="Ensembl"/>
</dbReference>
<dbReference type="GO" id="GO:0005925">
    <property type="term" value="C:focal adhesion"/>
    <property type="evidence" value="ECO:0007669"/>
    <property type="project" value="UniProtKB-SubCell"/>
</dbReference>
<dbReference type="GO" id="GO:0005886">
    <property type="term" value="C:plasma membrane"/>
    <property type="evidence" value="ECO:0007669"/>
    <property type="project" value="Ensembl"/>
</dbReference>
<dbReference type="GO" id="GO:0032991">
    <property type="term" value="C:protein-containing complex"/>
    <property type="evidence" value="ECO:0007669"/>
    <property type="project" value="Ensembl"/>
</dbReference>
<dbReference type="GO" id="GO:0008270">
    <property type="term" value="F:zinc ion binding"/>
    <property type="evidence" value="ECO:0000250"/>
    <property type="project" value="UniProtKB"/>
</dbReference>
<dbReference type="GO" id="GO:0008285">
    <property type="term" value="P:negative regulation of cell population proliferation"/>
    <property type="evidence" value="ECO:0000250"/>
    <property type="project" value="UniProtKB"/>
</dbReference>
<dbReference type="CDD" id="cd09413">
    <property type="entry name" value="LIM1_Testin"/>
    <property type="match status" value="1"/>
</dbReference>
<dbReference type="CDD" id="cd09416">
    <property type="entry name" value="LIM2_Testin"/>
    <property type="match status" value="1"/>
</dbReference>
<dbReference type="CDD" id="cd09419">
    <property type="entry name" value="LIM3_Testin"/>
    <property type="match status" value="1"/>
</dbReference>
<dbReference type="CDD" id="cd09829">
    <property type="entry name" value="PET_testin"/>
    <property type="match status" value="1"/>
</dbReference>
<dbReference type="FunFam" id="2.10.110.10:FF:000061">
    <property type="entry name" value="Testin"/>
    <property type="match status" value="1"/>
</dbReference>
<dbReference type="FunFam" id="2.10.110.10:FF:000065">
    <property type="entry name" value="Testin"/>
    <property type="match status" value="1"/>
</dbReference>
<dbReference type="FunFam" id="2.10.110.10:FF:000005">
    <property type="entry name" value="Testin isoform 1"/>
    <property type="match status" value="1"/>
</dbReference>
<dbReference type="Gene3D" id="2.10.110.10">
    <property type="entry name" value="Cysteine Rich Protein"/>
    <property type="match status" value="3"/>
</dbReference>
<dbReference type="InterPro" id="IPR034958">
    <property type="entry name" value="LIM1_Testin"/>
</dbReference>
<dbReference type="InterPro" id="IPR034959">
    <property type="entry name" value="LIM2_Testin"/>
</dbReference>
<dbReference type="InterPro" id="IPR034960">
    <property type="entry name" value="LIM3_Testin"/>
</dbReference>
<dbReference type="InterPro" id="IPR010442">
    <property type="entry name" value="PET_domain"/>
</dbReference>
<dbReference type="InterPro" id="IPR033724">
    <property type="entry name" value="PET_testin"/>
</dbReference>
<dbReference type="InterPro" id="IPR047120">
    <property type="entry name" value="Pk/Esn/Tes"/>
</dbReference>
<dbReference type="InterPro" id="IPR001781">
    <property type="entry name" value="Znf_LIM"/>
</dbReference>
<dbReference type="PANTHER" id="PTHR24211">
    <property type="entry name" value="LIM DOMAIN-CONTAINING PROTEIN"/>
    <property type="match status" value="1"/>
</dbReference>
<dbReference type="PANTHER" id="PTHR24211:SF1">
    <property type="entry name" value="TESTIN"/>
    <property type="match status" value="1"/>
</dbReference>
<dbReference type="Pfam" id="PF00412">
    <property type="entry name" value="LIM"/>
    <property type="match status" value="3"/>
</dbReference>
<dbReference type="Pfam" id="PF06297">
    <property type="entry name" value="PET"/>
    <property type="match status" value="1"/>
</dbReference>
<dbReference type="SMART" id="SM00132">
    <property type="entry name" value="LIM"/>
    <property type="match status" value="3"/>
</dbReference>
<dbReference type="SUPFAM" id="SSF57716">
    <property type="entry name" value="Glucocorticoid receptor-like (DNA-binding domain)"/>
    <property type="match status" value="2"/>
</dbReference>
<dbReference type="PROSITE" id="PS00478">
    <property type="entry name" value="LIM_DOMAIN_1"/>
    <property type="match status" value="2"/>
</dbReference>
<dbReference type="PROSITE" id="PS50023">
    <property type="entry name" value="LIM_DOMAIN_2"/>
    <property type="match status" value="3"/>
</dbReference>
<dbReference type="PROSITE" id="PS51303">
    <property type="entry name" value="PET"/>
    <property type="match status" value="1"/>
</dbReference>
<accession>Q07E27</accession>
<organism>
    <name type="scientific">Mustela putorius furo</name>
    <name type="common">European domestic ferret</name>
    <name type="synonym">Mustela furo</name>
    <dbReference type="NCBI Taxonomy" id="9669"/>
    <lineage>
        <taxon>Eukaryota</taxon>
        <taxon>Metazoa</taxon>
        <taxon>Chordata</taxon>
        <taxon>Craniata</taxon>
        <taxon>Vertebrata</taxon>
        <taxon>Euteleostomi</taxon>
        <taxon>Mammalia</taxon>
        <taxon>Eutheria</taxon>
        <taxon>Laurasiatheria</taxon>
        <taxon>Carnivora</taxon>
        <taxon>Caniformia</taxon>
        <taxon>Musteloidea</taxon>
        <taxon>Mustelidae</taxon>
        <taxon>Mustelinae</taxon>
        <taxon>Mustela</taxon>
    </lineage>
</organism>
<reference key="1">
    <citation type="submission" date="2006-09" db="EMBL/GenBank/DDBJ databases">
        <title>NISC comparative sequencing initiative.</title>
        <authorList>
            <person name="Antonellis A."/>
            <person name="Ayele K."/>
            <person name="Benjamin B."/>
            <person name="Blakesley R.W."/>
            <person name="Boakye A."/>
            <person name="Bouffard G.G."/>
            <person name="Brinkley C."/>
            <person name="Brooks S."/>
            <person name="Chu G."/>
            <person name="Coleman H."/>
            <person name="Engle J."/>
            <person name="Gestole M."/>
            <person name="Greene A."/>
            <person name="Guan X."/>
            <person name="Gupta J."/>
            <person name="Haghighi P."/>
            <person name="Han J."/>
            <person name="Hansen N."/>
            <person name="Ho S.-L."/>
            <person name="Hu P."/>
            <person name="Hunter G."/>
            <person name="Hurle B."/>
            <person name="Idol J.R."/>
            <person name="Kwong P."/>
            <person name="Laric P."/>
            <person name="Larson S."/>
            <person name="Lee-Lin S.-Q."/>
            <person name="Legaspi R."/>
            <person name="Madden M."/>
            <person name="Maduro Q.L."/>
            <person name="Maduro V.B."/>
            <person name="Margulies E.H."/>
            <person name="Masiello C."/>
            <person name="Maskeri B."/>
            <person name="McDowell J."/>
            <person name="Mojidi H.A."/>
            <person name="Mullikin J.C."/>
            <person name="Oestreicher J.S."/>
            <person name="Park M."/>
            <person name="Portnoy M.E."/>
            <person name="Prasad A."/>
            <person name="Puri O."/>
            <person name="Reddix-Dugue N."/>
            <person name="Schandler K."/>
            <person name="Schueler M.G."/>
            <person name="Sison C."/>
            <person name="Stantripop S."/>
            <person name="Stephen E."/>
            <person name="Taye A."/>
            <person name="Thomas J.W."/>
            <person name="Thomas P.J."/>
            <person name="Tsipouri V."/>
            <person name="Ung L."/>
            <person name="Vogt J.L."/>
            <person name="Wetherby K.D."/>
            <person name="Young A."/>
            <person name="Green E.D."/>
        </authorList>
    </citation>
    <scope>NUCLEOTIDE SEQUENCE [LARGE SCALE GENOMIC DNA]</scope>
</reference>
<feature type="chain" id="PRO_0000260332" description="Testin">
    <location>
        <begin position="1"/>
        <end position="421"/>
    </location>
</feature>
<feature type="domain" description="PET" evidence="3">
    <location>
        <begin position="92"/>
        <end position="199"/>
    </location>
</feature>
<feature type="domain" description="LIM zinc-binding 1" evidence="2">
    <location>
        <begin position="234"/>
        <end position="297"/>
    </location>
</feature>
<feature type="domain" description="LIM zinc-binding 2" evidence="2">
    <location>
        <begin position="299"/>
        <end position="359"/>
    </location>
</feature>
<feature type="domain" description="LIM zinc-binding 3" evidence="2">
    <location>
        <begin position="362"/>
        <end position="421"/>
    </location>
</feature>
<feature type="region of interest" description="Disordered" evidence="4">
    <location>
        <begin position="133"/>
        <end position="164"/>
    </location>
</feature>
<feature type="compositionally biased region" description="Basic and acidic residues" evidence="4">
    <location>
        <begin position="155"/>
        <end position="164"/>
    </location>
</feature>
<gene>
    <name type="primary">TES</name>
</gene>
<sequence>MDLEAKVKKMGLGHEQGFGAPCLKCKEKCEGFELHFWRKICRNCKCGQEEHDVLLSNEEDRKVGKLFEDTKYTTLIAKLKSDGIPMYKRNVMILTNPVAAKKNVSINTVTYEWAPPVQNQALARQYMQMLPKEKQPVAGSEGAQYRKKQLAKQLPAHDQDPSKCHELSPKEVKEMEQFVKKYKSEALGVGDVKLPREMDAQGPNRMYIPSGDRSTPAAVGAMEDKSAEHKKTQYSCYCCKQSMKEGDPAIYAERAGYDKLWHPACFVCSTCHELLVDMIYFWKKGKLYCGRHYCDSEKPRCAGCDELIFSNEYTQAENQNWHLKHFCCFDCDNILAGEIYVMVNDKPVCKPCYVKNHAVVCQGCHNAIDPEVQRVTYNNFSWHASTECFLCSCCSKCLIGQKFMPVEGMVFCSVECKKMMS</sequence>
<proteinExistence type="inferred from homology"/>
<evidence type="ECO:0000250" key="1"/>
<evidence type="ECO:0000255" key="2">
    <source>
        <dbReference type="PROSITE-ProRule" id="PRU00125"/>
    </source>
</evidence>
<evidence type="ECO:0000255" key="3">
    <source>
        <dbReference type="PROSITE-ProRule" id="PRU00636"/>
    </source>
</evidence>
<evidence type="ECO:0000256" key="4">
    <source>
        <dbReference type="SAM" id="MobiDB-lite"/>
    </source>
</evidence>
<evidence type="ECO:0000305" key="5"/>